<accession>Q7MNM5</accession>
<organism>
    <name type="scientific">Vibrio vulnificus (strain YJ016)</name>
    <dbReference type="NCBI Taxonomy" id="196600"/>
    <lineage>
        <taxon>Bacteria</taxon>
        <taxon>Pseudomonadati</taxon>
        <taxon>Pseudomonadota</taxon>
        <taxon>Gammaproteobacteria</taxon>
        <taxon>Vibrionales</taxon>
        <taxon>Vibrionaceae</taxon>
        <taxon>Vibrio</taxon>
    </lineage>
</organism>
<keyword id="KW-0004">4Fe-4S</keyword>
<keyword id="KW-0408">Iron</keyword>
<keyword id="KW-0411">Iron-sulfur</keyword>
<keyword id="KW-0414">Isoprene biosynthesis</keyword>
<keyword id="KW-0479">Metal-binding</keyword>
<keyword id="KW-0560">Oxidoreductase</keyword>
<name>ISPH_VIBVY</name>
<dbReference type="EC" id="1.17.7.4" evidence="1"/>
<dbReference type="EMBL" id="BA000037">
    <property type="protein sequence ID" value="BAC93454.1"/>
    <property type="status" value="ALT_INIT"/>
    <property type="molecule type" value="Genomic_DNA"/>
</dbReference>
<dbReference type="SMR" id="Q7MNM5"/>
<dbReference type="STRING" id="672.VV93_v1c06300"/>
<dbReference type="KEGG" id="vvy:VV0690"/>
<dbReference type="eggNOG" id="COG0761">
    <property type="taxonomic scope" value="Bacteria"/>
</dbReference>
<dbReference type="HOGENOM" id="CLU_027486_1_0_6"/>
<dbReference type="UniPathway" id="UPA00056">
    <property type="reaction ID" value="UER00097"/>
</dbReference>
<dbReference type="UniPathway" id="UPA00059">
    <property type="reaction ID" value="UER00105"/>
</dbReference>
<dbReference type="Proteomes" id="UP000002675">
    <property type="component" value="Chromosome I"/>
</dbReference>
<dbReference type="GO" id="GO:0051539">
    <property type="term" value="F:4 iron, 4 sulfur cluster binding"/>
    <property type="evidence" value="ECO:0007669"/>
    <property type="project" value="UniProtKB-UniRule"/>
</dbReference>
<dbReference type="GO" id="GO:0051745">
    <property type="term" value="F:4-hydroxy-3-methylbut-2-enyl diphosphate reductase activity"/>
    <property type="evidence" value="ECO:0007669"/>
    <property type="project" value="UniProtKB-UniRule"/>
</dbReference>
<dbReference type="GO" id="GO:0046872">
    <property type="term" value="F:metal ion binding"/>
    <property type="evidence" value="ECO:0007669"/>
    <property type="project" value="UniProtKB-KW"/>
</dbReference>
<dbReference type="GO" id="GO:0050992">
    <property type="term" value="P:dimethylallyl diphosphate biosynthetic process"/>
    <property type="evidence" value="ECO:0007669"/>
    <property type="project" value="UniProtKB-UniRule"/>
</dbReference>
<dbReference type="GO" id="GO:0019288">
    <property type="term" value="P:isopentenyl diphosphate biosynthetic process, methylerythritol 4-phosphate pathway"/>
    <property type="evidence" value="ECO:0007669"/>
    <property type="project" value="UniProtKB-UniRule"/>
</dbReference>
<dbReference type="GO" id="GO:0016114">
    <property type="term" value="P:terpenoid biosynthetic process"/>
    <property type="evidence" value="ECO:0007669"/>
    <property type="project" value="UniProtKB-UniRule"/>
</dbReference>
<dbReference type="CDD" id="cd13944">
    <property type="entry name" value="lytB_ispH"/>
    <property type="match status" value="1"/>
</dbReference>
<dbReference type="Gene3D" id="3.40.50.11270">
    <property type="match status" value="1"/>
</dbReference>
<dbReference type="Gene3D" id="3.40.1010.20">
    <property type="entry name" value="4-hydroxy-3-methylbut-2-enyl diphosphate reductase, catalytic domain"/>
    <property type="match status" value="2"/>
</dbReference>
<dbReference type="HAMAP" id="MF_00191">
    <property type="entry name" value="IspH"/>
    <property type="match status" value="1"/>
</dbReference>
<dbReference type="InterPro" id="IPR003451">
    <property type="entry name" value="LytB/IspH"/>
</dbReference>
<dbReference type="NCBIfam" id="TIGR00216">
    <property type="entry name" value="ispH_lytB"/>
    <property type="match status" value="1"/>
</dbReference>
<dbReference type="NCBIfam" id="NF002188">
    <property type="entry name" value="PRK01045.1-2"/>
    <property type="match status" value="1"/>
</dbReference>
<dbReference type="NCBIfam" id="NF002190">
    <property type="entry name" value="PRK01045.1-4"/>
    <property type="match status" value="1"/>
</dbReference>
<dbReference type="PANTHER" id="PTHR30426">
    <property type="entry name" value="4-HYDROXY-3-METHYLBUT-2-ENYL DIPHOSPHATE REDUCTASE"/>
    <property type="match status" value="1"/>
</dbReference>
<dbReference type="PANTHER" id="PTHR30426:SF0">
    <property type="entry name" value="4-HYDROXY-3-METHYLBUT-2-ENYL DIPHOSPHATE REDUCTASE"/>
    <property type="match status" value="1"/>
</dbReference>
<dbReference type="Pfam" id="PF02401">
    <property type="entry name" value="LYTB"/>
    <property type="match status" value="1"/>
</dbReference>
<gene>
    <name evidence="1" type="primary">ispH</name>
    <name type="ordered locus">VV0690</name>
</gene>
<feature type="chain" id="PRO_0000128893" description="4-hydroxy-3-methylbut-2-enyl diphosphate reductase">
    <location>
        <begin position="1"/>
        <end position="316"/>
    </location>
</feature>
<feature type="active site" description="Proton donor" evidence="1">
    <location>
        <position position="126"/>
    </location>
</feature>
<feature type="binding site" evidence="1">
    <location>
        <position position="12"/>
    </location>
    <ligand>
        <name>[4Fe-4S] cluster</name>
        <dbReference type="ChEBI" id="CHEBI:49883"/>
    </ligand>
</feature>
<feature type="binding site" evidence="1">
    <location>
        <position position="41"/>
    </location>
    <ligand>
        <name>(2E)-4-hydroxy-3-methylbut-2-enyl diphosphate</name>
        <dbReference type="ChEBI" id="CHEBI:128753"/>
    </ligand>
</feature>
<feature type="binding site" evidence="1">
    <location>
        <position position="41"/>
    </location>
    <ligand>
        <name>dimethylallyl diphosphate</name>
        <dbReference type="ChEBI" id="CHEBI:57623"/>
    </ligand>
</feature>
<feature type="binding site" evidence="1">
    <location>
        <position position="41"/>
    </location>
    <ligand>
        <name>isopentenyl diphosphate</name>
        <dbReference type="ChEBI" id="CHEBI:128769"/>
    </ligand>
</feature>
<feature type="binding site" evidence="1">
    <location>
        <position position="74"/>
    </location>
    <ligand>
        <name>(2E)-4-hydroxy-3-methylbut-2-enyl diphosphate</name>
        <dbReference type="ChEBI" id="CHEBI:128753"/>
    </ligand>
</feature>
<feature type="binding site" evidence="1">
    <location>
        <position position="74"/>
    </location>
    <ligand>
        <name>dimethylallyl diphosphate</name>
        <dbReference type="ChEBI" id="CHEBI:57623"/>
    </ligand>
</feature>
<feature type="binding site" evidence="1">
    <location>
        <position position="74"/>
    </location>
    <ligand>
        <name>isopentenyl diphosphate</name>
        <dbReference type="ChEBI" id="CHEBI:128769"/>
    </ligand>
</feature>
<feature type="binding site" evidence="1">
    <location>
        <position position="96"/>
    </location>
    <ligand>
        <name>[4Fe-4S] cluster</name>
        <dbReference type="ChEBI" id="CHEBI:49883"/>
    </ligand>
</feature>
<feature type="binding site" evidence="1">
    <location>
        <position position="124"/>
    </location>
    <ligand>
        <name>(2E)-4-hydroxy-3-methylbut-2-enyl diphosphate</name>
        <dbReference type="ChEBI" id="CHEBI:128753"/>
    </ligand>
</feature>
<feature type="binding site" evidence="1">
    <location>
        <position position="124"/>
    </location>
    <ligand>
        <name>dimethylallyl diphosphate</name>
        <dbReference type="ChEBI" id="CHEBI:57623"/>
    </ligand>
</feature>
<feature type="binding site" evidence="1">
    <location>
        <position position="124"/>
    </location>
    <ligand>
        <name>isopentenyl diphosphate</name>
        <dbReference type="ChEBI" id="CHEBI:128769"/>
    </ligand>
</feature>
<feature type="binding site" evidence="1">
    <location>
        <position position="169"/>
    </location>
    <ligand>
        <name>(2E)-4-hydroxy-3-methylbut-2-enyl diphosphate</name>
        <dbReference type="ChEBI" id="CHEBI:128753"/>
    </ligand>
</feature>
<feature type="binding site" evidence="1">
    <location>
        <position position="199"/>
    </location>
    <ligand>
        <name>[4Fe-4S] cluster</name>
        <dbReference type="ChEBI" id="CHEBI:49883"/>
    </ligand>
</feature>
<feature type="binding site" evidence="1">
    <location>
        <position position="227"/>
    </location>
    <ligand>
        <name>(2E)-4-hydroxy-3-methylbut-2-enyl diphosphate</name>
        <dbReference type="ChEBI" id="CHEBI:128753"/>
    </ligand>
</feature>
<feature type="binding site" evidence="1">
    <location>
        <position position="227"/>
    </location>
    <ligand>
        <name>dimethylallyl diphosphate</name>
        <dbReference type="ChEBI" id="CHEBI:57623"/>
    </ligand>
</feature>
<feature type="binding site" evidence="1">
    <location>
        <position position="227"/>
    </location>
    <ligand>
        <name>isopentenyl diphosphate</name>
        <dbReference type="ChEBI" id="CHEBI:128769"/>
    </ligand>
</feature>
<feature type="binding site" evidence="1">
    <location>
        <position position="228"/>
    </location>
    <ligand>
        <name>(2E)-4-hydroxy-3-methylbut-2-enyl diphosphate</name>
        <dbReference type="ChEBI" id="CHEBI:128753"/>
    </ligand>
</feature>
<feature type="binding site" evidence="1">
    <location>
        <position position="228"/>
    </location>
    <ligand>
        <name>dimethylallyl diphosphate</name>
        <dbReference type="ChEBI" id="CHEBI:57623"/>
    </ligand>
</feature>
<feature type="binding site" evidence="1">
    <location>
        <position position="228"/>
    </location>
    <ligand>
        <name>isopentenyl diphosphate</name>
        <dbReference type="ChEBI" id="CHEBI:128769"/>
    </ligand>
</feature>
<feature type="binding site" evidence="1">
    <location>
        <position position="229"/>
    </location>
    <ligand>
        <name>(2E)-4-hydroxy-3-methylbut-2-enyl diphosphate</name>
        <dbReference type="ChEBI" id="CHEBI:128753"/>
    </ligand>
</feature>
<feature type="binding site" evidence="1">
    <location>
        <position position="229"/>
    </location>
    <ligand>
        <name>dimethylallyl diphosphate</name>
        <dbReference type="ChEBI" id="CHEBI:57623"/>
    </ligand>
</feature>
<feature type="binding site" evidence="1">
    <location>
        <position position="229"/>
    </location>
    <ligand>
        <name>isopentenyl diphosphate</name>
        <dbReference type="ChEBI" id="CHEBI:128769"/>
    </ligand>
</feature>
<feature type="binding site" evidence="1">
    <location>
        <position position="271"/>
    </location>
    <ligand>
        <name>(2E)-4-hydroxy-3-methylbut-2-enyl diphosphate</name>
        <dbReference type="ChEBI" id="CHEBI:128753"/>
    </ligand>
</feature>
<feature type="binding site" evidence="1">
    <location>
        <position position="271"/>
    </location>
    <ligand>
        <name>dimethylallyl diphosphate</name>
        <dbReference type="ChEBI" id="CHEBI:57623"/>
    </ligand>
</feature>
<feature type="binding site" evidence="1">
    <location>
        <position position="271"/>
    </location>
    <ligand>
        <name>isopentenyl diphosphate</name>
        <dbReference type="ChEBI" id="CHEBI:128769"/>
    </ligand>
</feature>
<reference key="1">
    <citation type="journal article" date="2003" name="Genome Res.">
        <title>Comparative genome analysis of Vibrio vulnificus, a marine pathogen.</title>
        <authorList>
            <person name="Chen C.-Y."/>
            <person name="Wu K.-M."/>
            <person name="Chang Y.-C."/>
            <person name="Chang C.-H."/>
            <person name="Tsai H.-C."/>
            <person name="Liao T.-L."/>
            <person name="Liu Y.-M."/>
            <person name="Chen H.-J."/>
            <person name="Shen A.B.-T."/>
            <person name="Li J.-C."/>
            <person name="Su T.-L."/>
            <person name="Shao C.-P."/>
            <person name="Lee C.-T."/>
            <person name="Hor L.-I."/>
            <person name="Tsai S.-F."/>
        </authorList>
    </citation>
    <scope>NUCLEOTIDE SEQUENCE [LARGE SCALE GENOMIC DNA]</scope>
    <source>
        <strain>YJ016</strain>
    </source>
</reference>
<evidence type="ECO:0000255" key="1">
    <source>
        <dbReference type="HAMAP-Rule" id="MF_00191"/>
    </source>
</evidence>
<evidence type="ECO:0000305" key="2"/>
<comment type="function">
    <text evidence="1">Catalyzes the conversion of 1-hydroxy-2-methyl-2-(E)-butenyl 4-diphosphate (HMBPP) into a mixture of isopentenyl diphosphate (IPP) and dimethylallyl diphosphate (DMAPP). Acts in the terminal step of the DOXP/MEP pathway for isoprenoid precursor biosynthesis.</text>
</comment>
<comment type="catalytic activity">
    <reaction evidence="1">
        <text>isopentenyl diphosphate + 2 oxidized [2Fe-2S]-[ferredoxin] + H2O = (2E)-4-hydroxy-3-methylbut-2-enyl diphosphate + 2 reduced [2Fe-2S]-[ferredoxin] + 2 H(+)</text>
        <dbReference type="Rhea" id="RHEA:24488"/>
        <dbReference type="Rhea" id="RHEA-COMP:10000"/>
        <dbReference type="Rhea" id="RHEA-COMP:10001"/>
        <dbReference type="ChEBI" id="CHEBI:15377"/>
        <dbReference type="ChEBI" id="CHEBI:15378"/>
        <dbReference type="ChEBI" id="CHEBI:33737"/>
        <dbReference type="ChEBI" id="CHEBI:33738"/>
        <dbReference type="ChEBI" id="CHEBI:128753"/>
        <dbReference type="ChEBI" id="CHEBI:128769"/>
        <dbReference type="EC" id="1.17.7.4"/>
    </reaction>
</comment>
<comment type="catalytic activity">
    <reaction evidence="1">
        <text>dimethylallyl diphosphate + 2 oxidized [2Fe-2S]-[ferredoxin] + H2O = (2E)-4-hydroxy-3-methylbut-2-enyl diphosphate + 2 reduced [2Fe-2S]-[ferredoxin] + 2 H(+)</text>
        <dbReference type="Rhea" id="RHEA:24825"/>
        <dbReference type="Rhea" id="RHEA-COMP:10000"/>
        <dbReference type="Rhea" id="RHEA-COMP:10001"/>
        <dbReference type="ChEBI" id="CHEBI:15377"/>
        <dbReference type="ChEBI" id="CHEBI:15378"/>
        <dbReference type="ChEBI" id="CHEBI:33737"/>
        <dbReference type="ChEBI" id="CHEBI:33738"/>
        <dbReference type="ChEBI" id="CHEBI:57623"/>
        <dbReference type="ChEBI" id="CHEBI:128753"/>
        <dbReference type="EC" id="1.17.7.4"/>
    </reaction>
</comment>
<comment type="cofactor">
    <cofactor evidence="1">
        <name>[4Fe-4S] cluster</name>
        <dbReference type="ChEBI" id="CHEBI:49883"/>
    </cofactor>
    <text evidence="1">Binds 1 [4Fe-4S] cluster per subunit.</text>
</comment>
<comment type="pathway">
    <text evidence="1">Isoprenoid biosynthesis; dimethylallyl diphosphate biosynthesis; dimethylallyl diphosphate from (2E)-4-hydroxy-3-methylbutenyl diphosphate: step 1/1.</text>
</comment>
<comment type="pathway">
    <text evidence="1">Isoprenoid biosynthesis; isopentenyl diphosphate biosynthesis via DXP pathway; isopentenyl diphosphate from 1-deoxy-D-xylulose 5-phosphate: step 6/6.</text>
</comment>
<comment type="similarity">
    <text evidence="1">Belongs to the IspH family.</text>
</comment>
<comment type="sequence caution" evidence="2">
    <conflict type="erroneous initiation">
        <sequence resource="EMBL-CDS" id="BAC93454"/>
    </conflict>
</comment>
<protein>
    <recommendedName>
        <fullName evidence="1">4-hydroxy-3-methylbut-2-enyl diphosphate reductase</fullName>
        <shortName evidence="1">HMBPP reductase</shortName>
        <ecNumber evidence="1">1.17.7.4</ecNumber>
    </recommendedName>
</protein>
<proteinExistence type="inferred from homology"/>
<sequence>MKILLANPRGFCAGVDRAISIVERALELYQPPIYVRHEVVHNRFVVEGLKQRGAIFVEELHEVPDDNIVIFSAHGVSQAVRQEAKERALTVFDATCPLVTKVHMEVARASRKHMEVVLIGHAGHPEVEGTMGQYASLQGGMYLVEKPEDVLGLKAIVKDPSNLHYVSQTTLSVDETADVIDELRRVFPEIQGPRKDDICYATQNRQDAVRELAKDVDVVVVVGSKNSSNSTRLKELAEKLGTPAYLTDCPQDIEPQWFDGKVKVGVTAGASAPEELVNQILTRIKELGAQSVEEVLGREENMFFEVPKELQIKQID</sequence>